<accession>B7IVD7</accession>
<dbReference type="EMBL" id="CP001186">
    <property type="protein sequence ID" value="ACK94281.1"/>
    <property type="molecule type" value="Genomic_DNA"/>
</dbReference>
<dbReference type="RefSeq" id="WP_000750717.1">
    <property type="nucleotide sequence ID" value="NC_011772.1"/>
</dbReference>
<dbReference type="SMR" id="B7IVD7"/>
<dbReference type="KEGG" id="bcg:BCG9842_B3040"/>
<dbReference type="HOGENOM" id="CLU_177534_0_0_9"/>
<dbReference type="Proteomes" id="UP000006744">
    <property type="component" value="Chromosome"/>
</dbReference>
<dbReference type="Gene3D" id="1.10.150.260">
    <property type="entry name" value="YozE SAM-like"/>
    <property type="match status" value="1"/>
</dbReference>
<dbReference type="HAMAP" id="MF_01538">
    <property type="entry name" value="UPF0346"/>
    <property type="match status" value="1"/>
</dbReference>
<dbReference type="InterPro" id="IPR010673">
    <property type="entry name" value="UPF0346"/>
</dbReference>
<dbReference type="InterPro" id="IPR023089">
    <property type="entry name" value="YozE_SAM-like"/>
</dbReference>
<dbReference type="InterPro" id="IPR036806">
    <property type="entry name" value="YozE_SAM-like_sf"/>
</dbReference>
<dbReference type="NCBIfam" id="NF010193">
    <property type="entry name" value="PRK13672.1"/>
    <property type="match status" value="1"/>
</dbReference>
<dbReference type="Pfam" id="PF06855">
    <property type="entry name" value="YozE_SAM_like"/>
    <property type="match status" value="1"/>
</dbReference>
<dbReference type="PIRSF" id="PIRSF037262">
    <property type="entry name" value="UCP037262"/>
    <property type="match status" value="1"/>
</dbReference>
<dbReference type="SUPFAM" id="SSF140652">
    <property type="entry name" value="YozE-like"/>
    <property type="match status" value="1"/>
</dbReference>
<protein>
    <recommendedName>
        <fullName evidence="1">UPF0346 protein BCG9842_B3040</fullName>
    </recommendedName>
</protein>
<reference key="1">
    <citation type="submission" date="2008-10" db="EMBL/GenBank/DDBJ databases">
        <title>Genome sequence of Bacillus cereus G9842.</title>
        <authorList>
            <person name="Dodson R.J."/>
            <person name="Durkin A.S."/>
            <person name="Rosovitz M.J."/>
            <person name="Rasko D.A."/>
            <person name="Hoffmaster A."/>
            <person name="Ravel J."/>
            <person name="Sutton G."/>
        </authorList>
    </citation>
    <scope>NUCLEOTIDE SEQUENCE [LARGE SCALE GENOMIC DNA]</scope>
    <source>
        <strain>G9842</strain>
    </source>
</reference>
<evidence type="ECO:0000255" key="1">
    <source>
        <dbReference type="HAMAP-Rule" id="MF_01538"/>
    </source>
</evidence>
<name>Y3040_BACC2</name>
<gene>
    <name type="ordered locus">BCG9842_B3040</name>
</gene>
<comment type="similarity">
    <text evidence="1">Belongs to the UPF0346 family.</text>
</comment>
<sequence>MKKTFYHYMMKHRAALFRNEISDLAEAMYDDLSFPKQSEDYDEISSYLELSGMLESMSIFDEAWDLYIQDR</sequence>
<organism>
    <name type="scientific">Bacillus cereus (strain G9842)</name>
    <dbReference type="NCBI Taxonomy" id="405531"/>
    <lineage>
        <taxon>Bacteria</taxon>
        <taxon>Bacillati</taxon>
        <taxon>Bacillota</taxon>
        <taxon>Bacilli</taxon>
        <taxon>Bacillales</taxon>
        <taxon>Bacillaceae</taxon>
        <taxon>Bacillus</taxon>
        <taxon>Bacillus cereus group</taxon>
    </lineage>
</organism>
<feature type="chain" id="PRO_1000198688" description="UPF0346 protein BCG9842_B3040">
    <location>
        <begin position="1"/>
        <end position="71"/>
    </location>
</feature>
<proteinExistence type="inferred from homology"/>